<reference key="1">
    <citation type="submission" date="2007-08" db="EMBL/GenBank/DDBJ databases">
        <title>Complete sequence of Shewanella sediminis HAW-EB3.</title>
        <authorList>
            <consortium name="US DOE Joint Genome Institute"/>
            <person name="Copeland A."/>
            <person name="Lucas S."/>
            <person name="Lapidus A."/>
            <person name="Barry K."/>
            <person name="Glavina del Rio T."/>
            <person name="Dalin E."/>
            <person name="Tice H."/>
            <person name="Pitluck S."/>
            <person name="Chertkov O."/>
            <person name="Brettin T."/>
            <person name="Bruce D."/>
            <person name="Detter J.C."/>
            <person name="Han C."/>
            <person name="Schmutz J."/>
            <person name="Larimer F."/>
            <person name="Land M."/>
            <person name="Hauser L."/>
            <person name="Kyrpides N."/>
            <person name="Kim E."/>
            <person name="Zhao J.-S."/>
            <person name="Richardson P."/>
        </authorList>
    </citation>
    <scope>NUCLEOTIDE SEQUENCE [LARGE SCALE GENOMIC DNA]</scope>
    <source>
        <strain>HAW-EB3</strain>
    </source>
</reference>
<dbReference type="EMBL" id="CP000821">
    <property type="protein sequence ID" value="ABV38897.1"/>
    <property type="molecule type" value="Genomic_DNA"/>
</dbReference>
<dbReference type="RefSeq" id="WP_012144626.1">
    <property type="nucleotide sequence ID" value="NC_009831.1"/>
</dbReference>
<dbReference type="SMR" id="A8G1C4"/>
<dbReference type="STRING" id="425104.Ssed_4293"/>
<dbReference type="KEGG" id="sse:Ssed_4293"/>
<dbReference type="eggNOG" id="COG0203">
    <property type="taxonomic scope" value="Bacteria"/>
</dbReference>
<dbReference type="HOGENOM" id="CLU_074407_2_2_6"/>
<dbReference type="OrthoDB" id="9809073at2"/>
<dbReference type="Proteomes" id="UP000002015">
    <property type="component" value="Chromosome"/>
</dbReference>
<dbReference type="GO" id="GO:0022625">
    <property type="term" value="C:cytosolic large ribosomal subunit"/>
    <property type="evidence" value="ECO:0007669"/>
    <property type="project" value="TreeGrafter"/>
</dbReference>
<dbReference type="GO" id="GO:0003735">
    <property type="term" value="F:structural constituent of ribosome"/>
    <property type="evidence" value="ECO:0007669"/>
    <property type="project" value="InterPro"/>
</dbReference>
<dbReference type="GO" id="GO:0006412">
    <property type="term" value="P:translation"/>
    <property type="evidence" value="ECO:0007669"/>
    <property type="project" value="UniProtKB-UniRule"/>
</dbReference>
<dbReference type="FunFam" id="3.90.1030.10:FF:000001">
    <property type="entry name" value="50S ribosomal protein L17"/>
    <property type="match status" value="1"/>
</dbReference>
<dbReference type="Gene3D" id="3.90.1030.10">
    <property type="entry name" value="Ribosomal protein L17"/>
    <property type="match status" value="1"/>
</dbReference>
<dbReference type="HAMAP" id="MF_01368">
    <property type="entry name" value="Ribosomal_bL17"/>
    <property type="match status" value="1"/>
</dbReference>
<dbReference type="InterPro" id="IPR000456">
    <property type="entry name" value="Ribosomal_bL17"/>
</dbReference>
<dbReference type="InterPro" id="IPR047859">
    <property type="entry name" value="Ribosomal_bL17_CS"/>
</dbReference>
<dbReference type="InterPro" id="IPR036373">
    <property type="entry name" value="Ribosomal_bL17_sf"/>
</dbReference>
<dbReference type="NCBIfam" id="TIGR00059">
    <property type="entry name" value="L17"/>
    <property type="match status" value="1"/>
</dbReference>
<dbReference type="PANTHER" id="PTHR14413:SF16">
    <property type="entry name" value="LARGE RIBOSOMAL SUBUNIT PROTEIN BL17M"/>
    <property type="match status" value="1"/>
</dbReference>
<dbReference type="PANTHER" id="PTHR14413">
    <property type="entry name" value="RIBOSOMAL PROTEIN L17"/>
    <property type="match status" value="1"/>
</dbReference>
<dbReference type="Pfam" id="PF01196">
    <property type="entry name" value="Ribosomal_L17"/>
    <property type="match status" value="1"/>
</dbReference>
<dbReference type="SUPFAM" id="SSF64263">
    <property type="entry name" value="Prokaryotic ribosomal protein L17"/>
    <property type="match status" value="1"/>
</dbReference>
<dbReference type="PROSITE" id="PS01167">
    <property type="entry name" value="RIBOSOMAL_L17"/>
    <property type="match status" value="1"/>
</dbReference>
<keyword id="KW-1185">Reference proteome</keyword>
<keyword id="KW-0687">Ribonucleoprotein</keyword>
<keyword id="KW-0689">Ribosomal protein</keyword>
<accession>A8G1C4</accession>
<comment type="subunit">
    <text evidence="1">Part of the 50S ribosomal subunit. Contacts protein L32.</text>
</comment>
<comment type="similarity">
    <text evidence="1">Belongs to the bacterial ribosomal protein bL17 family.</text>
</comment>
<organism>
    <name type="scientific">Shewanella sediminis (strain HAW-EB3)</name>
    <dbReference type="NCBI Taxonomy" id="425104"/>
    <lineage>
        <taxon>Bacteria</taxon>
        <taxon>Pseudomonadati</taxon>
        <taxon>Pseudomonadota</taxon>
        <taxon>Gammaproteobacteria</taxon>
        <taxon>Alteromonadales</taxon>
        <taxon>Shewanellaceae</taxon>
        <taxon>Shewanella</taxon>
    </lineage>
</organism>
<evidence type="ECO:0000255" key="1">
    <source>
        <dbReference type="HAMAP-Rule" id="MF_01368"/>
    </source>
</evidence>
<evidence type="ECO:0000305" key="2"/>
<feature type="chain" id="PRO_1000087195" description="Large ribosomal subunit protein bL17">
    <location>
        <begin position="1"/>
        <end position="132"/>
    </location>
</feature>
<sequence length="132" mass="14875">MRHRKSGRQLNRNSSHRQAMFRNMASSLVRHEVIKTTVAKAKELRRVVEPLITLAKSDSVANRRLAFARTRDAEVVGKLFNELGPRYQERPGGYTRILKCGLRTGDKAPMAFIELVGRPEDAEAVEADDSAE</sequence>
<gene>
    <name evidence="1" type="primary">rplQ</name>
    <name type="ordered locus">Ssed_4293</name>
</gene>
<proteinExistence type="inferred from homology"/>
<protein>
    <recommendedName>
        <fullName evidence="1">Large ribosomal subunit protein bL17</fullName>
    </recommendedName>
    <alternativeName>
        <fullName evidence="2">50S ribosomal protein L17</fullName>
    </alternativeName>
</protein>
<name>RL17_SHESH</name>